<organism>
    <name type="scientific">Mycobacterium leprae (strain TN)</name>
    <dbReference type="NCBI Taxonomy" id="272631"/>
    <lineage>
        <taxon>Bacteria</taxon>
        <taxon>Bacillati</taxon>
        <taxon>Actinomycetota</taxon>
        <taxon>Actinomycetes</taxon>
        <taxon>Mycobacteriales</taxon>
        <taxon>Mycobacteriaceae</taxon>
        <taxon>Mycobacterium</taxon>
    </lineage>
</organism>
<comment type="function">
    <text evidence="1">Catalyzes the condensation of ATP and 5-phosphoribose 1-diphosphate to form N'-(5'-phosphoribosyl)-ATP (PR-ATP). Has a crucial role in the pathway because the rate of histidine biosynthesis seems to be controlled primarily by regulation of HisG enzymatic activity (By similarity).</text>
</comment>
<comment type="catalytic activity">
    <reaction>
        <text>1-(5-phospho-beta-D-ribosyl)-ATP + diphosphate = 5-phospho-alpha-D-ribose 1-diphosphate + ATP</text>
        <dbReference type="Rhea" id="RHEA:18473"/>
        <dbReference type="ChEBI" id="CHEBI:30616"/>
        <dbReference type="ChEBI" id="CHEBI:33019"/>
        <dbReference type="ChEBI" id="CHEBI:58017"/>
        <dbReference type="ChEBI" id="CHEBI:73183"/>
        <dbReference type="EC" id="2.4.2.17"/>
    </reaction>
</comment>
<comment type="cofactor">
    <cofactor evidence="1">
        <name>Mg(2+)</name>
        <dbReference type="ChEBI" id="CHEBI:18420"/>
    </cofactor>
</comment>
<comment type="activity regulation">
    <text evidence="1">Feedback inhibited by histidine.</text>
</comment>
<comment type="pathway">
    <text>Amino-acid biosynthesis; L-histidine biosynthesis; L-histidine from 5-phospho-alpha-D-ribose 1-diphosphate: step 1/9.</text>
</comment>
<comment type="subunit">
    <text evidence="1">Equilibrium between an active dimeric form, an inactive hexameric form and higher aggregates. Interconversion between the various forms is largely reversible and is influenced by the natural substrates and inhibitors of the enzyme (By similarity).</text>
</comment>
<comment type="subcellular location">
    <subcellularLocation>
        <location evidence="1">Cytoplasm</location>
    </subcellularLocation>
</comment>
<comment type="similarity">
    <text evidence="2">Belongs to the ATP phosphoribosyltransferase family. Long subfamily.</text>
</comment>
<comment type="sequence caution" evidence="2">
    <conflict type="erroneous initiation">
        <sequence resource="EMBL-CDS" id="CAC31691"/>
    </conflict>
</comment>
<dbReference type="EC" id="2.4.2.17"/>
<dbReference type="EMBL" id="U00017">
    <property type="protein sequence ID" value="AAA17183.1"/>
    <property type="molecule type" value="Genomic_DNA"/>
</dbReference>
<dbReference type="EMBL" id="AL035310">
    <property type="protein sequence ID" value="CAA22921.1"/>
    <property type="molecule type" value="Genomic_DNA"/>
</dbReference>
<dbReference type="EMBL" id="AL583921">
    <property type="protein sequence ID" value="CAC31691.1"/>
    <property type="status" value="ALT_INIT"/>
    <property type="molecule type" value="Genomic_DNA"/>
</dbReference>
<dbReference type="PIR" id="H87072">
    <property type="entry name" value="H87072"/>
</dbReference>
<dbReference type="PIR" id="S72843">
    <property type="entry name" value="S72843"/>
</dbReference>
<dbReference type="RefSeq" id="WP_041322695.1">
    <property type="nucleotide sequence ID" value="NC_002677.1"/>
</dbReference>
<dbReference type="SMR" id="Q49776"/>
<dbReference type="STRING" id="272631.gene:17575144"/>
<dbReference type="KEGG" id="mle:ML1310"/>
<dbReference type="Leproma" id="ML1310"/>
<dbReference type="eggNOG" id="COG0040">
    <property type="taxonomic scope" value="Bacteria"/>
</dbReference>
<dbReference type="HOGENOM" id="CLU_038115_1_1_11"/>
<dbReference type="UniPathway" id="UPA00031">
    <property type="reaction ID" value="UER00006"/>
</dbReference>
<dbReference type="Proteomes" id="UP000000806">
    <property type="component" value="Chromosome"/>
</dbReference>
<dbReference type="GO" id="GO:0005737">
    <property type="term" value="C:cytoplasm"/>
    <property type="evidence" value="ECO:0007669"/>
    <property type="project" value="UniProtKB-SubCell"/>
</dbReference>
<dbReference type="GO" id="GO:0005524">
    <property type="term" value="F:ATP binding"/>
    <property type="evidence" value="ECO:0007669"/>
    <property type="project" value="UniProtKB-KW"/>
</dbReference>
<dbReference type="GO" id="GO:0003879">
    <property type="term" value="F:ATP phosphoribosyltransferase activity"/>
    <property type="evidence" value="ECO:0007669"/>
    <property type="project" value="UniProtKB-UniRule"/>
</dbReference>
<dbReference type="GO" id="GO:0000287">
    <property type="term" value="F:magnesium ion binding"/>
    <property type="evidence" value="ECO:0007669"/>
    <property type="project" value="UniProtKB-UniRule"/>
</dbReference>
<dbReference type="GO" id="GO:0000105">
    <property type="term" value="P:L-histidine biosynthetic process"/>
    <property type="evidence" value="ECO:0007669"/>
    <property type="project" value="UniProtKB-UniRule"/>
</dbReference>
<dbReference type="CDD" id="cd13591">
    <property type="entry name" value="PBP2_HisGL1"/>
    <property type="match status" value="1"/>
</dbReference>
<dbReference type="FunFam" id="3.30.70.120:FF:000003">
    <property type="entry name" value="ATP phosphoribosyltransferase"/>
    <property type="match status" value="1"/>
</dbReference>
<dbReference type="FunFam" id="3.40.190.10:FF:000136">
    <property type="entry name" value="ATP phosphoribosyltransferase"/>
    <property type="match status" value="1"/>
</dbReference>
<dbReference type="Gene3D" id="3.30.70.120">
    <property type="match status" value="1"/>
</dbReference>
<dbReference type="Gene3D" id="3.40.190.10">
    <property type="entry name" value="Periplasmic binding protein-like II"/>
    <property type="match status" value="2"/>
</dbReference>
<dbReference type="HAMAP" id="MF_00079">
    <property type="entry name" value="HisG_Long"/>
    <property type="match status" value="1"/>
</dbReference>
<dbReference type="InterPro" id="IPR020621">
    <property type="entry name" value="ATP-PRT_HisG_long"/>
</dbReference>
<dbReference type="InterPro" id="IPR013820">
    <property type="entry name" value="ATP_PRibTrfase_cat"/>
</dbReference>
<dbReference type="InterPro" id="IPR018198">
    <property type="entry name" value="ATP_PRibTrfase_CS"/>
</dbReference>
<dbReference type="InterPro" id="IPR001348">
    <property type="entry name" value="ATP_PRibTrfase_HisG"/>
</dbReference>
<dbReference type="InterPro" id="IPR013115">
    <property type="entry name" value="HisG_C"/>
</dbReference>
<dbReference type="InterPro" id="IPR011322">
    <property type="entry name" value="N-reg_PII-like_a/b"/>
</dbReference>
<dbReference type="InterPro" id="IPR015867">
    <property type="entry name" value="N-reg_PII/ATP_PRibTrfase_C"/>
</dbReference>
<dbReference type="NCBIfam" id="TIGR00070">
    <property type="entry name" value="hisG"/>
    <property type="match status" value="1"/>
</dbReference>
<dbReference type="NCBIfam" id="TIGR03455">
    <property type="entry name" value="HisG_C-term"/>
    <property type="match status" value="1"/>
</dbReference>
<dbReference type="PANTHER" id="PTHR21403:SF8">
    <property type="entry name" value="ATP PHOSPHORIBOSYLTRANSFERASE"/>
    <property type="match status" value="1"/>
</dbReference>
<dbReference type="PANTHER" id="PTHR21403">
    <property type="entry name" value="ATP PHOSPHORIBOSYLTRANSFERASE ATP-PRTASE"/>
    <property type="match status" value="1"/>
</dbReference>
<dbReference type="Pfam" id="PF01634">
    <property type="entry name" value="HisG"/>
    <property type="match status" value="1"/>
</dbReference>
<dbReference type="Pfam" id="PF08029">
    <property type="entry name" value="HisG_C"/>
    <property type="match status" value="1"/>
</dbReference>
<dbReference type="SUPFAM" id="SSF54913">
    <property type="entry name" value="GlnB-like"/>
    <property type="match status" value="1"/>
</dbReference>
<dbReference type="SUPFAM" id="SSF53850">
    <property type="entry name" value="Periplasmic binding protein-like II"/>
    <property type="match status" value="1"/>
</dbReference>
<dbReference type="PROSITE" id="PS01316">
    <property type="entry name" value="ATP_P_PHORIBOSYLTR"/>
    <property type="match status" value="1"/>
</dbReference>
<evidence type="ECO:0000250" key="1"/>
<evidence type="ECO:0000305" key="2"/>
<gene>
    <name type="primary">hisG</name>
    <name type="ordered locus">ML1310</name>
    <name type="ORF">B2126_C1_162</name>
    <name type="ORF">MLCB2533.07</name>
</gene>
<sequence length="287" mass="30893">MLRVAVPNKGALSEPATEILAEAGYRRRTDPKDLTVVDPVNRVEFFFLRPKDIAIYVGSGDLDFGITGRDLVHDSDASVCERLALGFGSSSFRYAGPAGRDWTTSDLAGKRIATAYSNLVRKDLVAKGIEATVIRLDGAVEISVQLGVADVIADVVGSGRTLSLHDLVAFGEPLCDSEAVLIERGDRGSLDHHETVAARDQLVARVQGVVFGQQYLMLDYDCPRSVLDKATLITSGLESPTIAPLAEPGWVAIRALVPRRDINGIMDELAAIGAKAILASDIRFCRF</sequence>
<reference key="1">
    <citation type="submission" date="1994-03" db="EMBL/GenBank/DDBJ databases">
        <authorList>
            <person name="Smith D.R."/>
            <person name="Robison K."/>
        </authorList>
    </citation>
    <scope>NUCLEOTIDE SEQUENCE [GENOMIC DNA]</scope>
</reference>
<reference key="2">
    <citation type="journal article" date="2001" name="Nature">
        <title>Massive gene decay in the leprosy bacillus.</title>
        <authorList>
            <person name="Cole S.T."/>
            <person name="Eiglmeier K."/>
            <person name="Parkhill J."/>
            <person name="James K.D."/>
            <person name="Thomson N.R."/>
            <person name="Wheeler P.R."/>
            <person name="Honore N."/>
            <person name="Garnier T."/>
            <person name="Churcher C.M."/>
            <person name="Harris D.E."/>
            <person name="Mungall K.L."/>
            <person name="Basham D."/>
            <person name="Brown D."/>
            <person name="Chillingworth T."/>
            <person name="Connor R."/>
            <person name="Davies R.M."/>
            <person name="Devlin K."/>
            <person name="Duthoy S."/>
            <person name="Feltwell T."/>
            <person name="Fraser A."/>
            <person name="Hamlin N."/>
            <person name="Holroyd S."/>
            <person name="Hornsby T."/>
            <person name="Jagels K."/>
            <person name="Lacroix C."/>
            <person name="Maclean J."/>
            <person name="Moule S."/>
            <person name="Murphy L.D."/>
            <person name="Oliver K."/>
            <person name="Quail M.A."/>
            <person name="Rajandream M.A."/>
            <person name="Rutherford K.M."/>
            <person name="Rutter S."/>
            <person name="Seeger K."/>
            <person name="Simon S."/>
            <person name="Simmonds M."/>
            <person name="Skelton J."/>
            <person name="Squares R."/>
            <person name="Squares S."/>
            <person name="Stevens K."/>
            <person name="Taylor K."/>
            <person name="Whitehead S."/>
            <person name="Woodward J.R."/>
            <person name="Barrell B.G."/>
        </authorList>
    </citation>
    <scope>NUCLEOTIDE SEQUENCE [LARGE SCALE GENOMIC DNA]</scope>
    <source>
        <strain>TN</strain>
    </source>
</reference>
<protein>
    <recommendedName>
        <fullName>ATP phosphoribosyltransferase</fullName>
        <shortName>ATP-PRT</shortName>
        <shortName>ATP-PRTase</shortName>
        <ecNumber>2.4.2.17</ecNumber>
    </recommendedName>
</protein>
<accession>Q49776</accession>
<name>HIS1_MYCLE</name>
<keyword id="KW-0028">Amino-acid biosynthesis</keyword>
<keyword id="KW-0067">ATP-binding</keyword>
<keyword id="KW-0963">Cytoplasm</keyword>
<keyword id="KW-0328">Glycosyltransferase</keyword>
<keyword id="KW-0368">Histidine biosynthesis</keyword>
<keyword id="KW-0460">Magnesium</keyword>
<keyword id="KW-0479">Metal-binding</keyword>
<keyword id="KW-0547">Nucleotide-binding</keyword>
<keyword id="KW-1185">Reference proteome</keyword>
<keyword id="KW-0808">Transferase</keyword>
<proteinExistence type="inferred from homology"/>
<feature type="chain" id="PRO_0000151855" description="ATP phosphoribosyltransferase">
    <location>
        <begin position="1"/>
        <end position="287"/>
    </location>
</feature>